<protein>
    <recommendedName>
        <fullName evidence="1">Malate dehydrogenase</fullName>
        <ecNumber evidence="1">1.1.1.37</ecNumber>
    </recommendedName>
</protein>
<evidence type="ECO:0000255" key="1">
    <source>
        <dbReference type="HAMAP-Rule" id="MF_01517"/>
    </source>
</evidence>
<proteinExistence type="inferred from homology"/>
<comment type="function">
    <text evidence="1">Catalyzes the reversible oxidation of malate to oxaloacetate.</text>
</comment>
<comment type="catalytic activity">
    <reaction evidence="1">
        <text>(S)-malate + NAD(+) = oxaloacetate + NADH + H(+)</text>
        <dbReference type="Rhea" id="RHEA:21432"/>
        <dbReference type="ChEBI" id="CHEBI:15378"/>
        <dbReference type="ChEBI" id="CHEBI:15589"/>
        <dbReference type="ChEBI" id="CHEBI:16452"/>
        <dbReference type="ChEBI" id="CHEBI:57540"/>
        <dbReference type="ChEBI" id="CHEBI:57945"/>
        <dbReference type="EC" id="1.1.1.37"/>
    </reaction>
</comment>
<comment type="similarity">
    <text evidence="1">Belongs to the LDH/MDH superfamily. MDH type 2 family.</text>
</comment>
<gene>
    <name evidence="1" type="primary">mdh</name>
    <name type="ordered locus">BMASAVP1_1619</name>
</gene>
<accession>A1UZ10</accession>
<keyword id="KW-0520">NAD</keyword>
<keyword id="KW-0560">Oxidoreductase</keyword>
<keyword id="KW-0816">Tricarboxylic acid cycle</keyword>
<organism>
    <name type="scientific">Burkholderia mallei (strain SAVP1)</name>
    <dbReference type="NCBI Taxonomy" id="320388"/>
    <lineage>
        <taxon>Bacteria</taxon>
        <taxon>Pseudomonadati</taxon>
        <taxon>Pseudomonadota</taxon>
        <taxon>Betaproteobacteria</taxon>
        <taxon>Burkholderiales</taxon>
        <taxon>Burkholderiaceae</taxon>
        <taxon>Burkholderia</taxon>
        <taxon>pseudomallei group</taxon>
    </lineage>
</organism>
<name>MDH_BURMS</name>
<dbReference type="EC" id="1.1.1.37" evidence="1"/>
<dbReference type="EMBL" id="CP000525">
    <property type="protein sequence ID" value="ABM48957.1"/>
    <property type="molecule type" value="Genomic_DNA"/>
</dbReference>
<dbReference type="RefSeq" id="WP_004187735.1">
    <property type="nucleotide sequence ID" value="NC_008784.1"/>
</dbReference>
<dbReference type="SMR" id="A1UZ10"/>
<dbReference type="KEGG" id="bmv:BMASAVP1_1619"/>
<dbReference type="HOGENOM" id="CLU_040727_2_0_4"/>
<dbReference type="GO" id="GO:0030060">
    <property type="term" value="F:L-malate dehydrogenase (NAD+) activity"/>
    <property type="evidence" value="ECO:0007669"/>
    <property type="project" value="UniProtKB-UniRule"/>
</dbReference>
<dbReference type="GO" id="GO:0006108">
    <property type="term" value="P:malate metabolic process"/>
    <property type="evidence" value="ECO:0007669"/>
    <property type="project" value="InterPro"/>
</dbReference>
<dbReference type="GO" id="GO:0006099">
    <property type="term" value="P:tricarboxylic acid cycle"/>
    <property type="evidence" value="ECO:0007669"/>
    <property type="project" value="UniProtKB-UniRule"/>
</dbReference>
<dbReference type="CDD" id="cd01338">
    <property type="entry name" value="MDH_chloroplast-like"/>
    <property type="match status" value="1"/>
</dbReference>
<dbReference type="FunFam" id="3.40.50.720:FF:000010">
    <property type="entry name" value="Malate dehydrogenase"/>
    <property type="match status" value="1"/>
</dbReference>
<dbReference type="FunFam" id="3.90.110.10:FF:000002">
    <property type="entry name" value="Malate dehydrogenase"/>
    <property type="match status" value="1"/>
</dbReference>
<dbReference type="Gene3D" id="3.90.110.10">
    <property type="entry name" value="Lactate dehydrogenase/glycoside hydrolase, family 4, C-terminal"/>
    <property type="match status" value="1"/>
</dbReference>
<dbReference type="Gene3D" id="3.40.50.720">
    <property type="entry name" value="NAD(P)-binding Rossmann-like Domain"/>
    <property type="match status" value="1"/>
</dbReference>
<dbReference type="HAMAP" id="MF_01517">
    <property type="entry name" value="Malate_dehydrog_2"/>
    <property type="match status" value="1"/>
</dbReference>
<dbReference type="InterPro" id="IPR001557">
    <property type="entry name" value="L-lactate/malate_DH"/>
</dbReference>
<dbReference type="InterPro" id="IPR022383">
    <property type="entry name" value="Lactate/malate_DH_C"/>
</dbReference>
<dbReference type="InterPro" id="IPR001236">
    <property type="entry name" value="Lactate/malate_DH_N"/>
</dbReference>
<dbReference type="InterPro" id="IPR015955">
    <property type="entry name" value="Lactate_DH/Glyco_Ohase_4_C"/>
</dbReference>
<dbReference type="InterPro" id="IPR010945">
    <property type="entry name" value="Malate_DH_type2"/>
</dbReference>
<dbReference type="InterPro" id="IPR036291">
    <property type="entry name" value="NAD(P)-bd_dom_sf"/>
</dbReference>
<dbReference type="NCBIfam" id="TIGR01759">
    <property type="entry name" value="MalateDH-SF1"/>
    <property type="match status" value="1"/>
</dbReference>
<dbReference type="NCBIfam" id="NF003916">
    <property type="entry name" value="PRK05442.1"/>
    <property type="match status" value="1"/>
</dbReference>
<dbReference type="PANTHER" id="PTHR23382">
    <property type="entry name" value="MALATE DEHYDROGENASE"/>
    <property type="match status" value="1"/>
</dbReference>
<dbReference type="Pfam" id="PF02866">
    <property type="entry name" value="Ldh_1_C"/>
    <property type="match status" value="1"/>
</dbReference>
<dbReference type="Pfam" id="PF00056">
    <property type="entry name" value="Ldh_1_N"/>
    <property type="match status" value="1"/>
</dbReference>
<dbReference type="PIRSF" id="PIRSF000102">
    <property type="entry name" value="Lac_mal_DH"/>
    <property type="match status" value="1"/>
</dbReference>
<dbReference type="SUPFAM" id="SSF56327">
    <property type="entry name" value="LDH C-terminal domain-like"/>
    <property type="match status" value="1"/>
</dbReference>
<dbReference type="SUPFAM" id="SSF51735">
    <property type="entry name" value="NAD(P)-binding Rossmann-fold domains"/>
    <property type="match status" value="1"/>
</dbReference>
<reference key="1">
    <citation type="journal article" date="2010" name="Genome Biol. Evol.">
        <title>Continuing evolution of Burkholderia mallei through genome reduction and large-scale rearrangements.</title>
        <authorList>
            <person name="Losada L."/>
            <person name="Ronning C.M."/>
            <person name="DeShazer D."/>
            <person name="Woods D."/>
            <person name="Fedorova N."/>
            <person name="Kim H.S."/>
            <person name="Shabalina S.A."/>
            <person name="Pearson T.R."/>
            <person name="Brinkac L."/>
            <person name="Tan P."/>
            <person name="Nandi T."/>
            <person name="Crabtree J."/>
            <person name="Badger J."/>
            <person name="Beckstrom-Sternberg S."/>
            <person name="Saqib M."/>
            <person name="Schutzer S.E."/>
            <person name="Keim P."/>
            <person name="Nierman W.C."/>
        </authorList>
    </citation>
    <scope>NUCLEOTIDE SEQUENCE [LARGE SCALE GENOMIC DNA]</scope>
    <source>
        <strain>SAVP1</strain>
    </source>
</reference>
<feature type="chain" id="PRO_1000068601" description="Malate dehydrogenase">
    <location>
        <begin position="1"/>
        <end position="327"/>
    </location>
</feature>
<feature type="active site" description="Proton acceptor" evidence="1">
    <location>
        <position position="188"/>
    </location>
</feature>
<feature type="binding site" evidence="1">
    <location>
        <begin position="12"/>
        <end position="18"/>
    </location>
    <ligand>
        <name>NAD(+)</name>
        <dbReference type="ChEBI" id="CHEBI:57540"/>
    </ligand>
</feature>
<feature type="binding site" evidence="1">
    <location>
        <position position="93"/>
    </location>
    <ligand>
        <name>substrate</name>
    </ligand>
</feature>
<feature type="binding site" evidence="1">
    <location>
        <position position="99"/>
    </location>
    <ligand>
        <name>substrate</name>
    </ligand>
</feature>
<feature type="binding site" evidence="1">
    <location>
        <position position="106"/>
    </location>
    <ligand>
        <name>NAD(+)</name>
        <dbReference type="ChEBI" id="CHEBI:57540"/>
    </ligand>
</feature>
<feature type="binding site" evidence="1">
    <location>
        <position position="113"/>
    </location>
    <ligand>
        <name>NAD(+)</name>
        <dbReference type="ChEBI" id="CHEBI:57540"/>
    </ligand>
</feature>
<feature type="binding site" evidence="1">
    <location>
        <begin position="130"/>
        <end position="132"/>
    </location>
    <ligand>
        <name>NAD(+)</name>
        <dbReference type="ChEBI" id="CHEBI:57540"/>
    </ligand>
</feature>
<feature type="binding site" evidence="1">
    <location>
        <position position="132"/>
    </location>
    <ligand>
        <name>substrate</name>
    </ligand>
</feature>
<feature type="binding site" evidence="1">
    <location>
        <position position="163"/>
    </location>
    <ligand>
        <name>substrate</name>
    </ligand>
</feature>
<sequence length="327" mass="35015">MAKPAKRVAVTGAAGQIAYSLLFRIANGDLLGKDQPVILQLLDLPQAQAAVKGVVMELDDCAFPLLAGVVITDDPKVAFKDADVALLVGARPRSKGMERKDLLSANAEIFTVQGAALNEVASRDVKVLVVGNPANTNAYIAMKSAPDLPKKNFTAMLRLDHNRALSQLAAKSGKPVASIEKLAVWGNHSPTMYPDFRFATAEGESLLKLINDDVWNRDTFIPTVGKRGAAIIEARGLSSAASAANAAIDHVRDWVLGTNGKWVTMGIPSDGSYGIPEDIIYGVPVICENGEYKRVEGLEIDAFSREKMDGTLAELLEERDGVAHLLK</sequence>